<proteinExistence type="evidence at transcript level"/>
<name>EIF3I_XENLA</name>
<accession>Q66J51</accession>
<gene>
    <name type="primary">eif3i</name>
    <name type="synonym">eif3s2</name>
</gene>
<protein>
    <recommendedName>
        <fullName evidence="1">Eukaryotic translation initiation factor 3 subunit I</fullName>
        <shortName evidence="1">eIF3i</shortName>
    </recommendedName>
    <alternativeName>
        <fullName evidence="1">Eukaryotic translation initiation factor 3 subunit 2</fullName>
    </alternativeName>
    <alternativeName>
        <fullName evidence="1">eIF-3-beta</fullName>
    </alternativeName>
    <alternativeName>
        <fullName evidence="1">eIF3 p36</fullName>
    </alternativeName>
</protein>
<keyword id="KW-0963">Cytoplasm</keyword>
<keyword id="KW-0396">Initiation factor</keyword>
<keyword id="KW-0648">Protein biosynthesis</keyword>
<keyword id="KW-1185">Reference proteome</keyword>
<keyword id="KW-0677">Repeat</keyword>
<keyword id="KW-0853">WD repeat</keyword>
<dbReference type="EMBL" id="BC081058">
    <property type="protein sequence ID" value="AAH81058.1"/>
    <property type="molecule type" value="mRNA"/>
</dbReference>
<dbReference type="SMR" id="Q66J51"/>
<dbReference type="BioGRID" id="104348">
    <property type="interactions" value="3"/>
</dbReference>
<dbReference type="IntAct" id="Q66J51">
    <property type="interactions" value="1"/>
</dbReference>
<dbReference type="DNASU" id="447488"/>
<dbReference type="GeneID" id="447488"/>
<dbReference type="KEGG" id="xla:447488"/>
<dbReference type="AGR" id="Xenbase:XB-GENE-974385"/>
<dbReference type="CTD" id="447488"/>
<dbReference type="Xenbase" id="XB-GENE-974385">
    <property type="gene designation" value="eif3i.L"/>
</dbReference>
<dbReference type="OMA" id="VWFSHNG"/>
<dbReference type="OrthoDB" id="24966at2759"/>
<dbReference type="Proteomes" id="UP000186698">
    <property type="component" value="Chromosome 2L"/>
</dbReference>
<dbReference type="Bgee" id="447488">
    <property type="expression patterns" value="Expressed in spleen and 19 other cell types or tissues"/>
</dbReference>
<dbReference type="GO" id="GO:0016282">
    <property type="term" value="C:eukaryotic 43S preinitiation complex"/>
    <property type="evidence" value="ECO:0007669"/>
    <property type="project" value="UniProtKB-UniRule"/>
</dbReference>
<dbReference type="GO" id="GO:0033290">
    <property type="term" value="C:eukaryotic 48S preinitiation complex"/>
    <property type="evidence" value="ECO:0007669"/>
    <property type="project" value="UniProtKB-UniRule"/>
</dbReference>
<dbReference type="GO" id="GO:0005852">
    <property type="term" value="C:eukaryotic translation initiation factor 3 complex"/>
    <property type="evidence" value="ECO:0000250"/>
    <property type="project" value="UniProtKB"/>
</dbReference>
<dbReference type="GO" id="GO:0071541">
    <property type="term" value="C:eukaryotic translation initiation factor 3 complex, eIF3m"/>
    <property type="evidence" value="ECO:0000318"/>
    <property type="project" value="GO_Central"/>
</dbReference>
<dbReference type="GO" id="GO:0003723">
    <property type="term" value="F:RNA binding"/>
    <property type="evidence" value="ECO:0000318"/>
    <property type="project" value="GO_Central"/>
</dbReference>
<dbReference type="GO" id="GO:0003743">
    <property type="term" value="F:translation initiation factor activity"/>
    <property type="evidence" value="ECO:0000250"/>
    <property type="project" value="UniProtKB"/>
</dbReference>
<dbReference type="GO" id="GO:0002183">
    <property type="term" value="P:cytoplasmic translational initiation"/>
    <property type="evidence" value="ECO:0000318"/>
    <property type="project" value="GO_Central"/>
</dbReference>
<dbReference type="GO" id="GO:0001732">
    <property type="term" value="P:formation of cytoplasmic translation initiation complex"/>
    <property type="evidence" value="ECO:0007669"/>
    <property type="project" value="UniProtKB-UniRule"/>
</dbReference>
<dbReference type="GO" id="GO:0006413">
    <property type="term" value="P:translational initiation"/>
    <property type="evidence" value="ECO:0000250"/>
    <property type="project" value="UniProtKB"/>
</dbReference>
<dbReference type="FunFam" id="2.130.10.10:FF:000127">
    <property type="entry name" value="Eukaryotic translation initiation factor 3 subunit I"/>
    <property type="match status" value="1"/>
</dbReference>
<dbReference type="Gene3D" id="2.130.10.10">
    <property type="entry name" value="YVTN repeat-like/Quinoprotein amine dehydrogenase"/>
    <property type="match status" value="1"/>
</dbReference>
<dbReference type="HAMAP" id="MF_03008">
    <property type="entry name" value="eIF3i"/>
    <property type="match status" value="1"/>
</dbReference>
<dbReference type="InterPro" id="IPR027525">
    <property type="entry name" value="eIF3i"/>
</dbReference>
<dbReference type="InterPro" id="IPR015943">
    <property type="entry name" value="WD40/YVTN_repeat-like_dom_sf"/>
</dbReference>
<dbReference type="InterPro" id="IPR019775">
    <property type="entry name" value="WD40_repeat_CS"/>
</dbReference>
<dbReference type="InterPro" id="IPR036322">
    <property type="entry name" value="WD40_repeat_dom_sf"/>
</dbReference>
<dbReference type="InterPro" id="IPR001680">
    <property type="entry name" value="WD40_rpt"/>
</dbReference>
<dbReference type="PANTHER" id="PTHR19877">
    <property type="entry name" value="EUKARYOTIC TRANSLATION INITIATION FACTOR 3 SUBUNIT I"/>
    <property type="match status" value="1"/>
</dbReference>
<dbReference type="PANTHER" id="PTHR19877:SF1">
    <property type="entry name" value="EUKARYOTIC TRANSLATION INITIATION FACTOR 3 SUBUNIT I"/>
    <property type="match status" value="1"/>
</dbReference>
<dbReference type="Pfam" id="PF24805">
    <property type="entry name" value="EIF3I"/>
    <property type="match status" value="1"/>
</dbReference>
<dbReference type="SMART" id="SM00320">
    <property type="entry name" value="WD40"/>
    <property type="match status" value="5"/>
</dbReference>
<dbReference type="SUPFAM" id="SSF50978">
    <property type="entry name" value="WD40 repeat-like"/>
    <property type="match status" value="1"/>
</dbReference>
<dbReference type="PROSITE" id="PS00678">
    <property type="entry name" value="WD_REPEATS_1"/>
    <property type="match status" value="1"/>
</dbReference>
<dbReference type="PROSITE" id="PS50082">
    <property type="entry name" value="WD_REPEATS_2"/>
    <property type="match status" value="3"/>
</dbReference>
<dbReference type="PROSITE" id="PS50294">
    <property type="entry name" value="WD_REPEATS_REGION"/>
    <property type="match status" value="2"/>
</dbReference>
<comment type="function">
    <text evidence="1">Component of the eukaryotic translation initiation factor 3 (eIF-3) complex, which is involved in protein synthesis of a specialized repertoire of mRNAs and, together with other initiation factors, stimulates binding of mRNA and methionyl-tRNAi to the 40S ribosome. The eIF-3 complex specifically targets and initiates translation of a subset of mRNAs involved in cell proliferation.</text>
</comment>
<comment type="subunit">
    <text evidence="1">Component of the eukaryotic translation initiation factor 3 (eIF-3) complex, which is composed of 13 subunits: eif3a, eif3b, eif3c, eif3d, eif3e, eif3f, eif3g, eif3h, eif3i, eif3j, eif3k, eif3l and eif3m.</text>
</comment>
<comment type="subcellular location">
    <subcellularLocation>
        <location evidence="1">Cytoplasm</location>
    </subcellularLocation>
</comment>
<comment type="similarity">
    <text evidence="1">Belongs to the eIF-3 subunit I family.</text>
</comment>
<evidence type="ECO:0000255" key="1">
    <source>
        <dbReference type="HAMAP-Rule" id="MF_03008"/>
    </source>
</evidence>
<reference key="1">
    <citation type="submission" date="2004-08" db="EMBL/GenBank/DDBJ databases">
        <authorList>
            <consortium name="NIH - Xenopus Gene Collection (XGC) project"/>
        </authorList>
    </citation>
    <scope>NUCLEOTIDE SEQUENCE [LARGE SCALE MRNA]</scope>
    <source>
        <tissue>Kidney</tissue>
    </source>
</reference>
<organism>
    <name type="scientific">Xenopus laevis</name>
    <name type="common">African clawed frog</name>
    <dbReference type="NCBI Taxonomy" id="8355"/>
    <lineage>
        <taxon>Eukaryota</taxon>
        <taxon>Metazoa</taxon>
        <taxon>Chordata</taxon>
        <taxon>Craniata</taxon>
        <taxon>Vertebrata</taxon>
        <taxon>Euteleostomi</taxon>
        <taxon>Amphibia</taxon>
        <taxon>Batrachia</taxon>
        <taxon>Anura</taxon>
        <taxon>Pipoidea</taxon>
        <taxon>Pipidae</taxon>
        <taxon>Xenopodinae</taxon>
        <taxon>Xenopus</taxon>
        <taxon>Xenopus</taxon>
    </lineage>
</organism>
<feature type="chain" id="PRO_0000365333" description="Eukaryotic translation initiation factor 3 subunit I">
    <location>
        <begin position="1"/>
        <end position="325"/>
    </location>
</feature>
<feature type="repeat" description="WD 1">
    <location>
        <begin position="8"/>
        <end position="47"/>
    </location>
</feature>
<feature type="repeat" description="WD 2">
    <location>
        <begin position="50"/>
        <end position="91"/>
    </location>
</feature>
<feature type="repeat" description="WD 3">
    <location>
        <begin position="144"/>
        <end position="183"/>
    </location>
</feature>
<feature type="repeat" description="WD 4">
    <location>
        <begin position="186"/>
        <end position="225"/>
    </location>
</feature>
<feature type="repeat" description="WD 5">
    <location>
        <begin position="283"/>
        <end position="324"/>
    </location>
</feature>
<sequence>MRPILLQGHERSITQIKYNRDGDLLFTVAKDPVVNVWYSVNGERLGTYNGHTGAVWCVDVDWETRHVLSGSADNSCRLWDCETGKQLALLQTNSAVRTCGFDFGGNIIMFSTDKQMGYQCFVSFIDLRDPSQIEDNEPYMKIPCSESKITSAVWGPLGENIIAGHENGELNHYSAKSGEIVNSIKEHSKQINDIQTSRDMTMFVTASKDCTSKLFDSTSLEHQKTFRTERPVNSAAVSPIYDHVVLGGGQEAMDVTTTSTRIGKFEARFFHVAFEEEFGRVKGHFGPINSLAFHPDGKSYSSGGEDGYVRIHYFDPQYFDFEFES</sequence>